<proteinExistence type="inferred from homology"/>
<sequence length="183" mass="19575">MTGNIVARRYARALFALGAKSGVGELDKLGSDLAALAGALDAAPELGRIFRNPIITAGEKRNVILKLVEKYGVSATVRNFCLLLADKGRLDCLSDIQAFYGVLLDAEKGVIRGELMTAVELAEAKRAQVKAALEQQAGRKLELTFSVNKDILGGVVLKVGDRVLDASLRAQLGILKDNIKRGE</sequence>
<accession>B8DRC9</accession>
<organism>
    <name type="scientific">Nitratidesulfovibrio vulgaris (strain DSM 19637 / Miyazaki F)</name>
    <name type="common">Desulfovibrio vulgaris</name>
    <dbReference type="NCBI Taxonomy" id="883"/>
    <lineage>
        <taxon>Bacteria</taxon>
        <taxon>Pseudomonadati</taxon>
        <taxon>Thermodesulfobacteriota</taxon>
        <taxon>Desulfovibrionia</taxon>
        <taxon>Desulfovibrionales</taxon>
        <taxon>Desulfovibrionaceae</taxon>
        <taxon>Nitratidesulfovibrio</taxon>
    </lineage>
</organism>
<protein>
    <recommendedName>
        <fullName evidence="1">ATP synthase subunit delta</fullName>
    </recommendedName>
    <alternativeName>
        <fullName evidence="1">ATP synthase F(1) sector subunit delta</fullName>
    </alternativeName>
    <alternativeName>
        <fullName evidence="1">F-type ATPase subunit delta</fullName>
        <shortName evidence="1">F-ATPase subunit delta</shortName>
    </alternativeName>
</protein>
<gene>
    <name evidence="1" type="primary">atpH</name>
    <name type="ordered locus">DvMF_2828</name>
</gene>
<keyword id="KW-0066">ATP synthesis</keyword>
<keyword id="KW-0997">Cell inner membrane</keyword>
<keyword id="KW-1003">Cell membrane</keyword>
<keyword id="KW-0139">CF(1)</keyword>
<keyword id="KW-0375">Hydrogen ion transport</keyword>
<keyword id="KW-0406">Ion transport</keyword>
<keyword id="KW-0472">Membrane</keyword>
<keyword id="KW-0813">Transport</keyword>
<evidence type="ECO:0000255" key="1">
    <source>
        <dbReference type="HAMAP-Rule" id="MF_01416"/>
    </source>
</evidence>
<name>ATPD_NITV9</name>
<comment type="function">
    <text evidence="1">F(1)F(0) ATP synthase produces ATP from ADP in the presence of a proton or sodium gradient. F-type ATPases consist of two structural domains, F(1) containing the extramembraneous catalytic core and F(0) containing the membrane proton channel, linked together by a central stalk and a peripheral stalk. During catalysis, ATP synthesis in the catalytic domain of F(1) is coupled via a rotary mechanism of the central stalk subunits to proton translocation.</text>
</comment>
<comment type="function">
    <text evidence="1">This protein is part of the stalk that links CF(0) to CF(1). It either transmits conformational changes from CF(0) to CF(1) or is implicated in proton conduction.</text>
</comment>
<comment type="subunit">
    <text evidence="1">F-type ATPases have 2 components, F(1) - the catalytic core - and F(0) - the membrane proton channel. F(1) has five subunits: alpha(3), beta(3), gamma(1), delta(1), epsilon(1). F(0) has three main subunits: a(1), b(2) and c(10-14). The alpha and beta chains form an alternating ring which encloses part of the gamma chain. F(1) is attached to F(0) by a central stalk formed by the gamma and epsilon chains, while a peripheral stalk is formed by the delta and b chains.</text>
</comment>
<comment type="subcellular location">
    <subcellularLocation>
        <location evidence="1">Cell inner membrane</location>
        <topology evidence="1">Peripheral membrane protein</topology>
    </subcellularLocation>
</comment>
<comment type="similarity">
    <text evidence="1">Belongs to the ATPase delta chain family.</text>
</comment>
<reference key="1">
    <citation type="submission" date="2008-10" db="EMBL/GenBank/DDBJ databases">
        <title>Complete sequence of Desulfovibrio vulgaris str. 'Miyazaki F'.</title>
        <authorList>
            <person name="Lucas S."/>
            <person name="Copeland A."/>
            <person name="Lapidus A."/>
            <person name="Glavina del Rio T."/>
            <person name="Dalin E."/>
            <person name="Tice H."/>
            <person name="Bruce D."/>
            <person name="Goodwin L."/>
            <person name="Pitluck S."/>
            <person name="Sims D."/>
            <person name="Brettin T."/>
            <person name="Detter J.C."/>
            <person name="Han C."/>
            <person name="Larimer F."/>
            <person name="Land M."/>
            <person name="Hauser L."/>
            <person name="Kyrpides N."/>
            <person name="Mikhailova N."/>
            <person name="Hazen T.C."/>
            <person name="Richardson P."/>
        </authorList>
    </citation>
    <scope>NUCLEOTIDE SEQUENCE [LARGE SCALE GENOMIC DNA]</scope>
    <source>
        <strain>DSM 19637 / Miyazaki F</strain>
    </source>
</reference>
<dbReference type="EMBL" id="CP001197">
    <property type="protein sequence ID" value="ACL09766.1"/>
    <property type="molecule type" value="Genomic_DNA"/>
</dbReference>
<dbReference type="SMR" id="B8DRC9"/>
<dbReference type="STRING" id="883.DvMF_2828"/>
<dbReference type="KEGG" id="dvm:DvMF_2828"/>
<dbReference type="eggNOG" id="COG0712">
    <property type="taxonomic scope" value="Bacteria"/>
</dbReference>
<dbReference type="HOGENOM" id="CLU_085114_4_1_7"/>
<dbReference type="OrthoDB" id="9802471at2"/>
<dbReference type="GO" id="GO:0005886">
    <property type="term" value="C:plasma membrane"/>
    <property type="evidence" value="ECO:0007669"/>
    <property type="project" value="UniProtKB-SubCell"/>
</dbReference>
<dbReference type="GO" id="GO:0045259">
    <property type="term" value="C:proton-transporting ATP synthase complex"/>
    <property type="evidence" value="ECO:0007669"/>
    <property type="project" value="UniProtKB-KW"/>
</dbReference>
<dbReference type="GO" id="GO:0046933">
    <property type="term" value="F:proton-transporting ATP synthase activity, rotational mechanism"/>
    <property type="evidence" value="ECO:0007669"/>
    <property type="project" value="UniProtKB-UniRule"/>
</dbReference>
<dbReference type="Gene3D" id="1.10.520.20">
    <property type="entry name" value="N-terminal domain of the delta subunit of the F1F0-ATP synthase"/>
    <property type="match status" value="1"/>
</dbReference>
<dbReference type="HAMAP" id="MF_01416">
    <property type="entry name" value="ATP_synth_delta_bact"/>
    <property type="match status" value="1"/>
</dbReference>
<dbReference type="InterPro" id="IPR026015">
    <property type="entry name" value="ATP_synth_OSCP/delta_N_sf"/>
</dbReference>
<dbReference type="InterPro" id="IPR020781">
    <property type="entry name" value="ATPase_OSCP/d_CS"/>
</dbReference>
<dbReference type="InterPro" id="IPR000711">
    <property type="entry name" value="ATPase_OSCP/dsu"/>
</dbReference>
<dbReference type="NCBIfam" id="TIGR01145">
    <property type="entry name" value="ATP_synt_delta"/>
    <property type="match status" value="1"/>
</dbReference>
<dbReference type="PANTHER" id="PTHR11910">
    <property type="entry name" value="ATP SYNTHASE DELTA CHAIN"/>
    <property type="match status" value="1"/>
</dbReference>
<dbReference type="Pfam" id="PF00213">
    <property type="entry name" value="OSCP"/>
    <property type="match status" value="1"/>
</dbReference>
<dbReference type="PRINTS" id="PR00125">
    <property type="entry name" value="ATPASEDELTA"/>
</dbReference>
<dbReference type="SUPFAM" id="SSF47928">
    <property type="entry name" value="N-terminal domain of the delta subunit of the F1F0-ATP synthase"/>
    <property type="match status" value="1"/>
</dbReference>
<dbReference type="PROSITE" id="PS00389">
    <property type="entry name" value="ATPASE_DELTA"/>
    <property type="match status" value="1"/>
</dbReference>
<feature type="chain" id="PRO_1000184693" description="ATP synthase subunit delta">
    <location>
        <begin position="1"/>
        <end position="183"/>
    </location>
</feature>